<protein>
    <recommendedName>
        <fullName evidence="1">ATP synthase subunit beta, chloroplastic</fullName>
        <ecNumber evidence="1">7.1.2.2</ecNumber>
    </recommendedName>
    <alternativeName>
        <fullName evidence="1">ATP synthase F1 sector subunit beta</fullName>
    </alternativeName>
    <alternativeName>
        <fullName evidence="1">F-ATPase subunit beta</fullName>
    </alternativeName>
</protein>
<evidence type="ECO:0000255" key="1">
    <source>
        <dbReference type="HAMAP-Rule" id="MF_01347"/>
    </source>
</evidence>
<reference key="1">
    <citation type="journal article" date="2008" name="Nucleic Acids Res.">
        <title>The complete nucleotide sequences of the five genetically distinct plastid genomes of Oenothera, subsection Oenothera: I. Sequence evaluation and plastome evolution.</title>
        <authorList>
            <person name="Greiner S."/>
            <person name="Wang X."/>
            <person name="Rauwolf U."/>
            <person name="Silber M.V."/>
            <person name="Mayer K."/>
            <person name="Meurer J."/>
            <person name="Haberer G."/>
            <person name="Herrmann R.G."/>
        </authorList>
    </citation>
    <scope>NUCLEOTIDE SEQUENCE [LARGE SCALE GENOMIC DNA]</scope>
    <source>
        <strain>cv. Suaveolens Grado</strain>
    </source>
</reference>
<name>ATPB_OENBI</name>
<geneLocation type="chloroplast"/>
<gene>
    <name evidence="1" type="primary">atpB</name>
</gene>
<organism>
    <name type="scientific">Oenothera biennis</name>
    <name type="common">German evening primrose</name>
    <name type="synonym">Onagra biennis</name>
    <dbReference type="NCBI Taxonomy" id="3942"/>
    <lineage>
        <taxon>Eukaryota</taxon>
        <taxon>Viridiplantae</taxon>
        <taxon>Streptophyta</taxon>
        <taxon>Embryophyta</taxon>
        <taxon>Tracheophyta</taxon>
        <taxon>Spermatophyta</taxon>
        <taxon>Magnoliopsida</taxon>
        <taxon>eudicotyledons</taxon>
        <taxon>Gunneridae</taxon>
        <taxon>Pentapetalae</taxon>
        <taxon>rosids</taxon>
        <taxon>malvids</taxon>
        <taxon>Myrtales</taxon>
        <taxon>Onagraceae</taxon>
        <taxon>Onagroideae</taxon>
        <taxon>Onagreae</taxon>
        <taxon>Oenothera</taxon>
    </lineage>
</organism>
<keyword id="KW-0066">ATP synthesis</keyword>
<keyword id="KW-0067">ATP-binding</keyword>
<keyword id="KW-0139">CF(1)</keyword>
<keyword id="KW-0150">Chloroplast</keyword>
<keyword id="KW-0375">Hydrogen ion transport</keyword>
<keyword id="KW-0406">Ion transport</keyword>
<keyword id="KW-0472">Membrane</keyword>
<keyword id="KW-0547">Nucleotide-binding</keyword>
<keyword id="KW-0934">Plastid</keyword>
<keyword id="KW-0793">Thylakoid</keyword>
<keyword id="KW-1278">Translocase</keyword>
<keyword id="KW-0813">Transport</keyword>
<dbReference type="EC" id="7.1.2.2" evidence="1"/>
<dbReference type="EMBL" id="EU262889">
    <property type="protein sequence ID" value="ABW98856.1"/>
    <property type="molecule type" value="Genomic_DNA"/>
</dbReference>
<dbReference type="RefSeq" id="YP_001687351.1">
    <property type="nucleotide sequence ID" value="NC_010361.1"/>
</dbReference>
<dbReference type="SMR" id="B0Z4U4"/>
<dbReference type="GeneID" id="5952060"/>
<dbReference type="GO" id="GO:0009535">
    <property type="term" value="C:chloroplast thylakoid membrane"/>
    <property type="evidence" value="ECO:0007669"/>
    <property type="project" value="UniProtKB-SubCell"/>
</dbReference>
<dbReference type="GO" id="GO:0005739">
    <property type="term" value="C:mitochondrion"/>
    <property type="evidence" value="ECO:0007669"/>
    <property type="project" value="GOC"/>
</dbReference>
<dbReference type="GO" id="GO:0045259">
    <property type="term" value="C:proton-transporting ATP synthase complex"/>
    <property type="evidence" value="ECO:0007669"/>
    <property type="project" value="UniProtKB-KW"/>
</dbReference>
<dbReference type="GO" id="GO:0005524">
    <property type="term" value="F:ATP binding"/>
    <property type="evidence" value="ECO:0007669"/>
    <property type="project" value="UniProtKB-UniRule"/>
</dbReference>
<dbReference type="GO" id="GO:0016887">
    <property type="term" value="F:ATP hydrolysis activity"/>
    <property type="evidence" value="ECO:0007669"/>
    <property type="project" value="InterPro"/>
</dbReference>
<dbReference type="GO" id="GO:0046933">
    <property type="term" value="F:proton-transporting ATP synthase activity, rotational mechanism"/>
    <property type="evidence" value="ECO:0007669"/>
    <property type="project" value="UniProtKB-UniRule"/>
</dbReference>
<dbReference type="GO" id="GO:0042776">
    <property type="term" value="P:proton motive force-driven mitochondrial ATP synthesis"/>
    <property type="evidence" value="ECO:0007669"/>
    <property type="project" value="TreeGrafter"/>
</dbReference>
<dbReference type="CDD" id="cd18110">
    <property type="entry name" value="ATP-synt_F1_beta_C"/>
    <property type="match status" value="1"/>
</dbReference>
<dbReference type="CDD" id="cd18115">
    <property type="entry name" value="ATP-synt_F1_beta_N"/>
    <property type="match status" value="1"/>
</dbReference>
<dbReference type="CDD" id="cd01133">
    <property type="entry name" value="F1-ATPase_beta_CD"/>
    <property type="match status" value="1"/>
</dbReference>
<dbReference type="FunFam" id="1.10.1140.10:FF:000001">
    <property type="entry name" value="ATP synthase subunit beta"/>
    <property type="match status" value="1"/>
</dbReference>
<dbReference type="FunFam" id="3.40.50.12240:FF:000006">
    <property type="entry name" value="ATP synthase subunit beta"/>
    <property type="match status" value="1"/>
</dbReference>
<dbReference type="FunFam" id="3.40.50.300:FF:000004">
    <property type="entry name" value="ATP synthase subunit beta"/>
    <property type="match status" value="1"/>
</dbReference>
<dbReference type="FunFam" id="2.40.10.170:FF:000002">
    <property type="entry name" value="ATP synthase subunit beta, chloroplastic"/>
    <property type="match status" value="1"/>
</dbReference>
<dbReference type="Gene3D" id="2.40.10.170">
    <property type="match status" value="1"/>
</dbReference>
<dbReference type="Gene3D" id="1.10.1140.10">
    <property type="entry name" value="Bovine Mitochondrial F1-atpase, Atp Synthase Beta Chain, Chain D, domain 3"/>
    <property type="match status" value="1"/>
</dbReference>
<dbReference type="Gene3D" id="3.40.50.300">
    <property type="entry name" value="P-loop containing nucleotide triphosphate hydrolases"/>
    <property type="match status" value="1"/>
</dbReference>
<dbReference type="HAMAP" id="MF_01347">
    <property type="entry name" value="ATP_synth_beta_bact"/>
    <property type="match status" value="1"/>
</dbReference>
<dbReference type="InterPro" id="IPR003593">
    <property type="entry name" value="AAA+_ATPase"/>
</dbReference>
<dbReference type="InterPro" id="IPR055190">
    <property type="entry name" value="ATP-synt_VA_C"/>
</dbReference>
<dbReference type="InterPro" id="IPR005722">
    <property type="entry name" value="ATP_synth_F1_bsu"/>
</dbReference>
<dbReference type="InterPro" id="IPR020003">
    <property type="entry name" value="ATPase_a/bsu_AS"/>
</dbReference>
<dbReference type="InterPro" id="IPR050053">
    <property type="entry name" value="ATPase_alpha/beta_chains"/>
</dbReference>
<dbReference type="InterPro" id="IPR004100">
    <property type="entry name" value="ATPase_F1/V1/A1_a/bsu_N"/>
</dbReference>
<dbReference type="InterPro" id="IPR036121">
    <property type="entry name" value="ATPase_F1/V1/A1_a/bsu_N_sf"/>
</dbReference>
<dbReference type="InterPro" id="IPR000194">
    <property type="entry name" value="ATPase_F1/V1/A1_a/bsu_nucl-bd"/>
</dbReference>
<dbReference type="InterPro" id="IPR024034">
    <property type="entry name" value="ATPase_F1/V1_b/a_C"/>
</dbReference>
<dbReference type="InterPro" id="IPR027417">
    <property type="entry name" value="P-loop_NTPase"/>
</dbReference>
<dbReference type="NCBIfam" id="TIGR01039">
    <property type="entry name" value="atpD"/>
    <property type="match status" value="1"/>
</dbReference>
<dbReference type="PANTHER" id="PTHR15184">
    <property type="entry name" value="ATP SYNTHASE"/>
    <property type="match status" value="1"/>
</dbReference>
<dbReference type="PANTHER" id="PTHR15184:SF71">
    <property type="entry name" value="ATP SYNTHASE SUBUNIT BETA, MITOCHONDRIAL"/>
    <property type="match status" value="1"/>
</dbReference>
<dbReference type="Pfam" id="PF00006">
    <property type="entry name" value="ATP-synt_ab"/>
    <property type="match status" value="1"/>
</dbReference>
<dbReference type="Pfam" id="PF02874">
    <property type="entry name" value="ATP-synt_ab_N"/>
    <property type="match status" value="1"/>
</dbReference>
<dbReference type="Pfam" id="PF22919">
    <property type="entry name" value="ATP-synt_VA_C"/>
    <property type="match status" value="1"/>
</dbReference>
<dbReference type="SMART" id="SM00382">
    <property type="entry name" value="AAA"/>
    <property type="match status" value="1"/>
</dbReference>
<dbReference type="SUPFAM" id="SSF47917">
    <property type="entry name" value="C-terminal domain of alpha and beta subunits of F1 ATP synthase"/>
    <property type="match status" value="1"/>
</dbReference>
<dbReference type="SUPFAM" id="SSF50615">
    <property type="entry name" value="N-terminal domain of alpha and beta subunits of F1 ATP synthase"/>
    <property type="match status" value="1"/>
</dbReference>
<dbReference type="SUPFAM" id="SSF52540">
    <property type="entry name" value="P-loop containing nucleoside triphosphate hydrolases"/>
    <property type="match status" value="1"/>
</dbReference>
<dbReference type="PROSITE" id="PS00152">
    <property type="entry name" value="ATPASE_ALPHA_BETA"/>
    <property type="match status" value="1"/>
</dbReference>
<sequence>MRINPTTSGPGVSTLEKKKSGRIAQIIGPVLDVTFPPGKMPNIYNALVVKGRDTGGQEINVTCEVQQLLGNNRVRAVAMSATDGLTRGMEVIDTGAPLSVPVGGATLGRIFNVLGEPVDELGPVDTRTTSPIHRSAPAFIQLDTKLSIFETGIKVVDLLAPYRRGGKIGLFGGAGVGKTVLIMELINNIAKAHGGVSVFGGVGERTREGNDLYMEMKESGVINEQNIAESKVALVYGQMNEPPGARMRVGLTALTMAEYFRDVNKQNVLLFIDNIFRFVQAGSEVSALLGRMPSAVGYQPTLSTEMGSLQERITSTKAGSITSIQAVYVPADDLTDPAPATTFAHLDATTVLSRGLAAKGIYPAVDPLDSTSTMLQPRIVGDEHYETAQRVKETLQRYKELQDIISILGLDELSEEDRLTVARARKIERFLSQPFFVAEVFTGSPGKYVGLAETIRGFKLILSGELDGLPEQAFYLVGTIDEATAKAANLEMESDLKK</sequence>
<comment type="function">
    <text evidence="1">Produces ATP from ADP in the presence of a proton gradient across the membrane. The catalytic sites are hosted primarily by the beta subunits.</text>
</comment>
<comment type="catalytic activity">
    <reaction evidence="1">
        <text>ATP + H2O + 4 H(+)(in) = ADP + phosphate + 5 H(+)(out)</text>
        <dbReference type="Rhea" id="RHEA:57720"/>
        <dbReference type="ChEBI" id="CHEBI:15377"/>
        <dbReference type="ChEBI" id="CHEBI:15378"/>
        <dbReference type="ChEBI" id="CHEBI:30616"/>
        <dbReference type="ChEBI" id="CHEBI:43474"/>
        <dbReference type="ChEBI" id="CHEBI:456216"/>
        <dbReference type="EC" id="7.1.2.2"/>
    </reaction>
</comment>
<comment type="subunit">
    <text evidence="1">F-type ATPases have 2 components, CF(1) - the catalytic core - and CF(0) - the membrane proton channel. CF(1) has five subunits: alpha(3), beta(3), gamma(1), delta(1), epsilon(1). CF(0) has four main subunits: a(1), b(1), b'(1) and c(9-12).</text>
</comment>
<comment type="subcellular location">
    <subcellularLocation>
        <location evidence="1">Plastid</location>
        <location evidence="1">Chloroplast thylakoid membrane</location>
        <topology evidence="1">Peripheral membrane protein</topology>
    </subcellularLocation>
</comment>
<comment type="similarity">
    <text evidence="1">Belongs to the ATPase alpha/beta chains family.</text>
</comment>
<accession>B0Z4U4</accession>
<feature type="chain" id="PRO_0000339632" description="ATP synthase subunit beta, chloroplastic">
    <location>
        <begin position="1"/>
        <end position="498"/>
    </location>
</feature>
<feature type="binding site" evidence="1">
    <location>
        <begin position="172"/>
        <end position="179"/>
    </location>
    <ligand>
        <name>ATP</name>
        <dbReference type="ChEBI" id="CHEBI:30616"/>
    </ligand>
</feature>
<proteinExistence type="inferred from homology"/>